<sequence length="242" mass="27385">MSFSEDQAMEEAKLRNDETEEQDPVVRTYPVFFSPGLRNNLLLNQFPLRPKNRTYSDANGEAPIDVRVKPKTGWMEVDVPIPTTKYYNEDKAMKYGNGKKPIQTQTLSGRLQKPRTNLMVGLIRDGQFHIVPLRGLTQLRPSMKHVNEYTQKLKAAAGPSNSSSGTSTPRGPIRAVQVTAKQNTEAPKVSTTHIVRATEEEEWVELDCRPERESESILKQLECPIEHQPNECAAVDEDYSFI</sequence>
<organism>
    <name type="scientific">Schizosaccharomyces pombe (strain 972 / ATCC 24843)</name>
    <name type="common">Fission yeast</name>
    <dbReference type="NCBI Taxonomy" id="284812"/>
    <lineage>
        <taxon>Eukaryota</taxon>
        <taxon>Fungi</taxon>
        <taxon>Dikarya</taxon>
        <taxon>Ascomycota</taxon>
        <taxon>Taphrinomycotina</taxon>
        <taxon>Schizosaccharomycetes</taxon>
        <taxon>Schizosaccharomycetales</taxon>
        <taxon>Schizosaccharomycetaceae</taxon>
        <taxon>Schizosaccharomyces</taxon>
    </lineage>
</organism>
<dbReference type="EMBL" id="CU329672">
    <property type="protein sequence ID" value="CAA20918.1"/>
    <property type="molecule type" value="Genomic_DNA"/>
</dbReference>
<dbReference type="PIR" id="T41323">
    <property type="entry name" value="T41323"/>
</dbReference>
<dbReference type="RefSeq" id="NP_587713.1">
    <property type="nucleotide sequence ID" value="NM_001022708.2"/>
</dbReference>
<dbReference type="SMR" id="O74883"/>
<dbReference type="BioGRID" id="275463">
    <property type="interactions" value="6"/>
</dbReference>
<dbReference type="ComplexPortal" id="CPX-8905">
    <property type="entry name" value="DNA-directed RNA polymerase III complex"/>
</dbReference>
<dbReference type="FunCoup" id="O74883">
    <property type="interactions" value="46"/>
</dbReference>
<dbReference type="IntAct" id="O74883">
    <property type="interactions" value="1"/>
</dbReference>
<dbReference type="STRING" id="284812.O74883"/>
<dbReference type="iPTMnet" id="O74883"/>
<dbReference type="PaxDb" id="4896-SPCC330.13.1"/>
<dbReference type="EnsemblFungi" id="SPCC330.13.1">
    <property type="protein sequence ID" value="SPCC330.13.1:pep"/>
    <property type="gene ID" value="SPCC330.13"/>
</dbReference>
<dbReference type="GeneID" id="2538885"/>
<dbReference type="KEGG" id="spo:2538885"/>
<dbReference type="PomBase" id="SPCC330.13">
    <property type="gene designation" value="rpc37"/>
</dbReference>
<dbReference type="VEuPathDB" id="FungiDB:SPCC330.13"/>
<dbReference type="eggNOG" id="KOG2354">
    <property type="taxonomic scope" value="Eukaryota"/>
</dbReference>
<dbReference type="HOGENOM" id="CLU_1161721_0_0_1"/>
<dbReference type="InParanoid" id="O74883"/>
<dbReference type="OMA" id="NCHASIK"/>
<dbReference type="PhylomeDB" id="O74883"/>
<dbReference type="PRO" id="PR:O74883"/>
<dbReference type="Proteomes" id="UP000002485">
    <property type="component" value="Chromosome III"/>
</dbReference>
<dbReference type="GO" id="GO:0000785">
    <property type="term" value="C:chromatin"/>
    <property type="evidence" value="ECO:0000314"/>
    <property type="project" value="PomBase"/>
</dbReference>
<dbReference type="GO" id="GO:0005829">
    <property type="term" value="C:cytosol"/>
    <property type="evidence" value="ECO:0007005"/>
    <property type="project" value="PomBase"/>
</dbReference>
<dbReference type="GO" id="GO:0005634">
    <property type="term" value="C:nucleus"/>
    <property type="evidence" value="ECO:0007005"/>
    <property type="project" value="PomBase"/>
</dbReference>
<dbReference type="GO" id="GO:0005666">
    <property type="term" value="C:RNA polymerase III complex"/>
    <property type="evidence" value="ECO:0000266"/>
    <property type="project" value="PomBase"/>
</dbReference>
<dbReference type="GO" id="GO:0003899">
    <property type="term" value="F:DNA-directed RNA polymerase activity"/>
    <property type="evidence" value="ECO:0000266"/>
    <property type="project" value="PomBase"/>
</dbReference>
<dbReference type="GO" id="GO:0006383">
    <property type="term" value="P:transcription by RNA polymerase III"/>
    <property type="evidence" value="ECO:0000266"/>
    <property type="project" value="PomBase"/>
</dbReference>
<dbReference type="InterPro" id="IPR006886">
    <property type="entry name" value="RNA_pol_III_Rpc5"/>
</dbReference>
<dbReference type="PANTHER" id="PTHR12069:SF0">
    <property type="entry name" value="DNA-DIRECTED RNA POLYMERASE III SUBUNIT RPC5"/>
    <property type="match status" value="1"/>
</dbReference>
<dbReference type="PANTHER" id="PTHR12069">
    <property type="entry name" value="DNA-DIRECTED RNA POLYMERASES III 80 KDA POLYPEPTIDE RNA POLYMERASE III SUBUNIT 5"/>
    <property type="match status" value="1"/>
</dbReference>
<dbReference type="Pfam" id="PF04801">
    <property type="entry name" value="RPC5"/>
    <property type="match status" value="1"/>
</dbReference>
<reference key="1">
    <citation type="journal article" date="2002" name="Nature">
        <title>The genome sequence of Schizosaccharomyces pombe.</title>
        <authorList>
            <person name="Wood V."/>
            <person name="Gwilliam R."/>
            <person name="Rajandream M.A."/>
            <person name="Lyne M.H."/>
            <person name="Lyne R."/>
            <person name="Stewart A."/>
            <person name="Sgouros J.G."/>
            <person name="Peat N."/>
            <person name="Hayles J."/>
            <person name="Baker S.G."/>
            <person name="Basham D."/>
            <person name="Bowman S."/>
            <person name="Brooks K."/>
            <person name="Brown D."/>
            <person name="Brown S."/>
            <person name="Chillingworth T."/>
            <person name="Churcher C.M."/>
            <person name="Collins M."/>
            <person name="Connor R."/>
            <person name="Cronin A."/>
            <person name="Davis P."/>
            <person name="Feltwell T."/>
            <person name="Fraser A."/>
            <person name="Gentles S."/>
            <person name="Goble A."/>
            <person name="Hamlin N."/>
            <person name="Harris D.E."/>
            <person name="Hidalgo J."/>
            <person name="Hodgson G."/>
            <person name="Holroyd S."/>
            <person name="Hornsby T."/>
            <person name="Howarth S."/>
            <person name="Huckle E.J."/>
            <person name="Hunt S."/>
            <person name="Jagels K."/>
            <person name="James K.D."/>
            <person name="Jones L."/>
            <person name="Jones M."/>
            <person name="Leather S."/>
            <person name="McDonald S."/>
            <person name="McLean J."/>
            <person name="Mooney P."/>
            <person name="Moule S."/>
            <person name="Mungall K.L."/>
            <person name="Murphy L.D."/>
            <person name="Niblett D."/>
            <person name="Odell C."/>
            <person name="Oliver K."/>
            <person name="O'Neil S."/>
            <person name="Pearson D."/>
            <person name="Quail M.A."/>
            <person name="Rabbinowitsch E."/>
            <person name="Rutherford K.M."/>
            <person name="Rutter S."/>
            <person name="Saunders D."/>
            <person name="Seeger K."/>
            <person name="Sharp S."/>
            <person name="Skelton J."/>
            <person name="Simmonds M.N."/>
            <person name="Squares R."/>
            <person name="Squares S."/>
            <person name="Stevens K."/>
            <person name="Taylor K."/>
            <person name="Taylor R.G."/>
            <person name="Tivey A."/>
            <person name="Walsh S.V."/>
            <person name="Warren T."/>
            <person name="Whitehead S."/>
            <person name="Woodward J.R."/>
            <person name="Volckaert G."/>
            <person name="Aert R."/>
            <person name="Robben J."/>
            <person name="Grymonprez B."/>
            <person name="Weltjens I."/>
            <person name="Vanstreels E."/>
            <person name="Rieger M."/>
            <person name="Schaefer M."/>
            <person name="Mueller-Auer S."/>
            <person name="Gabel C."/>
            <person name="Fuchs M."/>
            <person name="Duesterhoeft A."/>
            <person name="Fritzc C."/>
            <person name="Holzer E."/>
            <person name="Moestl D."/>
            <person name="Hilbert H."/>
            <person name="Borzym K."/>
            <person name="Langer I."/>
            <person name="Beck A."/>
            <person name="Lehrach H."/>
            <person name="Reinhardt R."/>
            <person name="Pohl T.M."/>
            <person name="Eger P."/>
            <person name="Zimmermann W."/>
            <person name="Wedler H."/>
            <person name="Wambutt R."/>
            <person name="Purnelle B."/>
            <person name="Goffeau A."/>
            <person name="Cadieu E."/>
            <person name="Dreano S."/>
            <person name="Gloux S."/>
            <person name="Lelaure V."/>
            <person name="Mottier S."/>
            <person name="Galibert F."/>
            <person name="Aves S.J."/>
            <person name="Xiang Z."/>
            <person name="Hunt C."/>
            <person name="Moore K."/>
            <person name="Hurst S.M."/>
            <person name="Lucas M."/>
            <person name="Rochet M."/>
            <person name="Gaillardin C."/>
            <person name="Tallada V.A."/>
            <person name="Garzon A."/>
            <person name="Thode G."/>
            <person name="Daga R.R."/>
            <person name="Cruzado L."/>
            <person name="Jimenez J."/>
            <person name="Sanchez M."/>
            <person name="del Rey F."/>
            <person name="Benito J."/>
            <person name="Dominguez A."/>
            <person name="Revuelta J.L."/>
            <person name="Moreno S."/>
            <person name="Armstrong J."/>
            <person name="Forsburg S.L."/>
            <person name="Cerutti L."/>
            <person name="Lowe T."/>
            <person name="McCombie W.R."/>
            <person name="Paulsen I."/>
            <person name="Potashkin J."/>
            <person name="Shpakovski G.V."/>
            <person name="Ussery D."/>
            <person name="Barrell B.G."/>
            <person name="Nurse P."/>
        </authorList>
    </citation>
    <scope>NUCLEOTIDE SEQUENCE [LARGE SCALE GENOMIC DNA]</scope>
    <source>
        <strain>972 / ATCC 24843</strain>
    </source>
</reference>
<reference key="2">
    <citation type="journal article" date="2006" name="Nat. Biotechnol.">
        <title>ORFeome cloning and global analysis of protein localization in the fission yeast Schizosaccharomyces pombe.</title>
        <authorList>
            <person name="Matsuyama A."/>
            <person name="Arai R."/>
            <person name="Yashiroda Y."/>
            <person name="Shirai A."/>
            <person name="Kamata A."/>
            <person name="Sekido S."/>
            <person name="Kobayashi Y."/>
            <person name="Hashimoto A."/>
            <person name="Hamamoto M."/>
            <person name="Hiraoka Y."/>
            <person name="Horinouchi S."/>
            <person name="Yoshida M."/>
        </authorList>
    </citation>
    <scope>SUBCELLULAR LOCATION [LARGE SCALE ANALYSIS]</scope>
</reference>
<evidence type="ECO:0000250" key="1"/>
<evidence type="ECO:0000256" key="2">
    <source>
        <dbReference type="SAM" id="MobiDB-lite"/>
    </source>
</evidence>
<evidence type="ECO:0000269" key="3">
    <source>
    </source>
</evidence>
<gene>
    <name type="primary">rpc37</name>
    <name type="ORF">SPCC330.13</name>
</gene>
<comment type="function">
    <text evidence="1">DNA-dependent RNA polymerase catalyzes the transcription of DNA into RNA using the four ribonucleoside triphosphates as substrates. Specific peripheric component of RNA polymerase III which synthesizes small RNAs, such as 5S rRNA and tRNAs. The RPC53/RPC4-RPC37/RPC5 subcomplex is required for terminator recognition and reinitiation (By similarity).</text>
</comment>
<comment type="subunit">
    <text evidence="1">Component of the RNA polymerase III (Pol III) complex consisting of 17 subunits.</text>
</comment>
<comment type="subcellular location">
    <subcellularLocation>
        <location evidence="3">Cytoplasm</location>
    </subcellularLocation>
    <subcellularLocation>
        <location evidence="3">Nucleus</location>
    </subcellularLocation>
</comment>
<feature type="chain" id="PRO_0000357058" description="DNA-directed RNA polymerase III subunit rpc5">
    <location>
        <begin position="1"/>
        <end position="242"/>
    </location>
</feature>
<feature type="region of interest" description="Disordered" evidence="2">
    <location>
        <begin position="1"/>
        <end position="22"/>
    </location>
</feature>
<feature type="region of interest" description="Disordered" evidence="2">
    <location>
        <begin position="153"/>
        <end position="172"/>
    </location>
</feature>
<feature type="compositionally biased region" description="Low complexity" evidence="2">
    <location>
        <begin position="155"/>
        <end position="172"/>
    </location>
</feature>
<accession>O74883</accession>
<protein>
    <recommendedName>
        <fullName>DNA-directed RNA polymerase III subunit rpc5</fullName>
        <shortName>RNA polymerase III subunit C5</shortName>
    </recommendedName>
    <alternativeName>
        <fullName>RNA polymerase III subunit C37</fullName>
    </alternativeName>
</protein>
<keyword id="KW-0963">Cytoplasm</keyword>
<keyword id="KW-0240">DNA-directed RNA polymerase</keyword>
<keyword id="KW-0539">Nucleus</keyword>
<keyword id="KW-1185">Reference proteome</keyword>
<keyword id="KW-0804">Transcription</keyword>
<proteinExistence type="inferred from homology"/>
<name>RPC5_SCHPO</name>